<reference key="1">
    <citation type="journal article" date="1996" name="Proc. Natl. Acad. Sci. U.S.A.">
        <title>The evolution of the vertebrate Dlx gene family.</title>
        <authorList>
            <person name="Stock D.W."/>
            <person name="Ellies D.L."/>
            <person name="Zhao Z."/>
            <person name="Ekker M."/>
            <person name="Ruddle F.H."/>
            <person name="Weiss K.M."/>
        </authorList>
    </citation>
    <scope>NUCLEOTIDE SEQUENCE [MRNA]</scope>
    <source>
        <tissue>Larva</tissue>
    </source>
</reference>
<reference key="2">
    <citation type="journal article" date="2013" name="Nature">
        <title>The zebrafish reference genome sequence and its relationship to the human genome.</title>
        <authorList>
            <person name="Howe K."/>
            <person name="Clark M.D."/>
            <person name="Torroja C.F."/>
            <person name="Torrance J."/>
            <person name="Berthelot C."/>
            <person name="Muffato M."/>
            <person name="Collins J.E."/>
            <person name="Humphray S."/>
            <person name="McLaren K."/>
            <person name="Matthews L."/>
            <person name="McLaren S."/>
            <person name="Sealy I."/>
            <person name="Caccamo M."/>
            <person name="Churcher C."/>
            <person name="Scott C."/>
            <person name="Barrett J.C."/>
            <person name="Koch R."/>
            <person name="Rauch G.J."/>
            <person name="White S."/>
            <person name="Chow W."/>
            <person name="Kilian B."/>
            <person name="Quintais L.T."/>
            <person name="Guerra-Assuncao J.A."/>
            <person name="Zhou Y."/>
            <person name="Gu Y."/>
            <person name="Yen J."/>
            <person name="Vogel J.H."/>
            <person name="Eyre T."/>
            <person name="Redmond S."/>
            <person name="Banerjee R."/>
            <person name="Chi J."/>
            <person name="Fu B."/>
            <person name="Langley E."/>
            <person name="Maguire S.F."/>
            <person name="Laird G.K."/>
            <person name="Lloyd D."/>
            <person name="Kenyon E."/>
            <person name="Donaldson S."/>
            <person name="Sehra H."/>
            <person name="Almeida-King J."/>
            <person name="Loveland J."/>
            <person name="Trevanion S."/>
            <person name="Jones M."/>
            <person name="Quail M."/>
            <person name="Willey D."/>
            <person name="Hunt A."/>
            <person name="Burton J."/>
            <person name="Sims S."/>
            <person name="McLay K."/>
            <person name="Plumb B."/>
            <person name="Davis J."/>
            <person name="Clee C."/>
            <person name="Oliver K."/>
            <person name="Clark R."/>
            <person name="Riddle C."/>
            <person name="Elliot D."/>
            <person name="Threadgold G."/>
            <person name="Harden G."/>
            <person name="Ware D."/>
            <person name="Begum S."/>
            <person name="Mortimore B."/>
            <person name="Kerry G."/>
            <person name="Heath P."/>
            <person name="Phillimore B."/>
            <person name="Tracey A."/>
            <person name="Corby N."/>
            <person name="Dunn M."/>
            <person name="Johnson C."/>
            <person name="Wood J."/>
            <person name="Clark S."/>
            <person name="Pelan S."/>
            <person name="Griffiths G."/>
            <person name="Smith M."/>
            <person name="Glithero R."/>
            <person name="Howden P."/>
            <person name="Barker N."/>
            <person name="Lloyd C."/>
            <person name="Stevens C."/>
            <person name="Harley J."/>
            <person name="Holt K."/>
            <person name="Panagiotidis G."/>
            <person name="Lovell J."/>
            <person name="Beasley H."/>
            <person name="Henderson C."/>
            <person name="Gordon D."/>
            <person name="Auger K."/>
            <person name="Wright D."/>
            <person name="Collins J."/>
            <person name="Raisen C."/>
            <person name="Dyer L."/>
            <person name="Leung K."/>
            <person name="Robertson L."/>
            <person name="Ambridge K."/>
            <person name="Leongamornlert D."/>
            <person name="McGuire S."/>
            <person name="Gilderthorp R."/>
            <person name="Griffiths C."/>
            <person name="Manthravadi D."/>
            <person name="Nichol S."/>
            <person name="Barker G."/>
            <person name="Whitehead S."/>
            <person name="Kay M."/>
            <person name="Brown J."/>
            <person name="Murnane C."/>
            <person name="Gray E."/>
            <person name="Humphries M."/>
            <person name="Sycamore N."/>
            <person name="Barker D."/>
            <person name="Saunders D."/>
            <person name="Wallis J."/>
            <person name="Babbage A."/>
            <person name="Hammond S."/>
            <person name="Mashreghi-Mohammadi M."/>
            <person name="Barr L."/>
            <person name="Martin S."/>
            <person name="Wray P."/>
            <person name="Ellington A."/>
            <person name="Matthews N."/>
            <person name="Ellwood M."/>
            <person name="Woodmansey R."/>
            <person name="Clark G."/>
            <person name="Cooper J."/>
            <person name="Tromans A."/>
            <person name="Grafham D."/>
            <person name="Skuce C."/>
            <person name="Pandian R."/>
            <person name="Andrews R."/>
            <person name="Harrison E."/>
            <person name="Kimberley A."/>
            <person name="Garnett J."/>
            <person name="Fosker N."/>
            <person name="Hall R."/>
            <person name="Garner P."/>
            <person name="Kelly D."/>
            <person name="Bird C."/>
            <person name="Palmer S."/>
            <person name="Gehring I."/>
            <person name="Berger A."/>
            <person name="Dooley C.M."/>
            <person name="Ersan-Urun Z."/>
            <person name="Eser C."/>
            <person name="Geiger H."/>
            <person name="Geisler M."/>
            <person name="Karotki L."/>
            <person name="Kirn A."/>
            <person name="Konantz J."/>
            <person name="Konantz M."/>
            <person name="Oberlander M."/>
            <person name="Rudolph-Geiger S."/>
            <person name="Teucke M."/>
            <person name="Lanz C."/>
            <person name="Raddatz G."/>
            <person name="Osoegawa K."/>
            <person name="Zhu B."/>
            <person name="Rapp A."/>
            <person name="Widaa S."/>
            <person name="Langford C."/>
            <person name="Yang F."/>
            <person name="Schuster S.C."/>
            <person name="Carter N.P."/>
            <person name="Harrow J."/>
            <person name="Ning Z."/>
            <person name="Herrero J."/>
            <person name="Searle S.M."/>
            <person name="Enright A."/>
            <person name="Geisler R."/>
            <person name="Plasterk R.H."/>
            <person name="Lee C."/>
            <person name="Westerfield M."/>
            <person name="de Jong P.J."/>
            <person name="Zon L.I."/>
            <person name="Postlethwait J.H."/>
            <person name="Nusslein-Volhard C."/>
            <person name="Hubbard T.J."/>
            <person name="Roest Crollius H."/>
            <person name="Rogers J."/>
            <person name="Stemple D.L."/>
        </authorList>
    </citation>
    <scope>NUCLEOTIDE SEQUENCE [LARGE SCALE GENOMIC DNA]</scope>
    <source>
        <strain>Tuebingen</strain>
    </source>
</reference>
<name>DLX4A_DANRE</name>
<keyword id="KW-0217">Developmental protein</keyword>
<keyword id="KW-0238">DNA-binding</keyword>
<keyword id="KW-0371">Homeobox</keyword>
<keyword id="KW-0539">Nucleus</keyword>
<keyword id="KW-1185">Reference proteome</keyword>
<protein>
    <recommendedName>
        <fullName>Homeobox protein Dlx4a</fullName>
    </recommendedName>
    <alternativeName>
        <fullName>DLX-8</fullName>
    </alternativeName>
    <alternativeName>
        <fullName>Distal-less homeobox protein 4a</fullName>
    </alternativeName>
</protein>
<dbReference type="EMBL" id="U67846">
    <property type="protein sequence ID" value="AAC60029.1"/>
    <property type="molecule type" value="mRNA"/>
</dbReference>
<dbReference type="EMBL" id="AL590145">
    <property type="status" value="NOT_ANNOTATED_CDS"/>
    <property type="molecule type" value="Genomic_DNA"/>
</dbReference>
<dbReference type="RefSeq" id="NP_571375.1">
    <property type="nucleotide sequence ID" value="NM_131300.2"/>
</dbReference>
<dbReference type="SMR" id="Q98879"/>
<dbReference type="FunCoup" id="Q98879">
    <property type="interactions" value="16"/>
</dbReference>
<dbReference type="STRING" id="7955.ENSDARP00000122639"/>
<dbReference type="PaxDb" id="7955-ENSDARP00000122639"/>
<dbReference type="Ensembl" id="ENSDART00000133457">
    <property type="protein sequence ID" value="ENSDARP00000122639"/>
    <property type="gene ID" value="ENSDARG00000011956"/>
</dbReference>
<dbReference type="GeneID" id="30561"/>
<dbReference type="KEGG" id="dre:30561"/>
<dbReference type="AGR" id="ZFIN:ZDB-GENE-980526-73"/>
<dbReference type="CTD" id="30561"/>
<dbReference type="ZFIN" id="ZDB-GENE-980526-73">
    <property type="gene designation" value="dlx4a"/>
</dbReference>
<dbReference type="eggNOG" id="KOG0850">
    <property type="taxonomic scope" value="Eukaryota"/>
</dbReference>
<dbReference type="HOGENOM" id="CLU_074733_2_0_1"/>
<dbReference type="InParanoid" id="Q98879"/>
<dbReference type="OMA" id="GHTRIEE"/>
<dbReference type="OrthoDB" id="6159439at2759"/>
<dbReference type="PhylomeDB" id="Q98879"/>
<dbReference type="TreeFam" id="TF315720"/>
<dbReference type="PRO" id="PR:Q98879"/>
<dbReference type="Proteomes" id="UP000000437">
    <property type="component" value="Chromosome 3"/>
</dbReference>
<dbReference type="Bgee" id="ENSDARG00000011956">
    <property type="expression patterns" value="Expressed in pharyngeal gill and 29 other cell types or tissues"/>
</dbReference>
<dbReference type="GO" id="GO:0005634">
    <property type="term" value="C:nucleus"/>
    <property type="evidence" value="ECO:0007669"/>
    <property type="project" value="UniProtKB-SubCell"/>
</dbReference>
<dbReference type="GO" id="GO:0000981">
    <property type="term" value="F:DNA-binding transcription factor activity, RNA polymerase II-specific"/>
    <property type="evidence" value="ECO:0000318"/>
    <property type="project" value="GO_Central"/>
</dbReference>
<dbReference type="GO" id="GO:0000978">
    <property type="term" value="F:RNA polymerase II cis-regulatory region sequence-specific DNA binding"/>
    <property type="evidence" value="ECO:0000318"/>
    <property type="project" value="GO_Central"/>
</dbReference>
<dbReference type="GO" id="GO:0030154">
    <property type="term" value="P:cell differentiation"/>
    <property type="evidence" value="ECO:0000318"/>
    <property type="project" value="GO_Central"/>
</dbReference>
<dbReference type="GO" id="GO:0048598">
    <property type="term" value="P:embryonic morphogenesis"/>
    <property type="evidence" value="ECO:0007669"/>
    <property type="project" value="UniProtKB-ARBA"/>
</dbReference>
<dbReference type="GO" id="GO:0048706">
    <property type="term" value="P:embryonic skeletal system development"/>
    <property type="evidence" value="ECO:0000318"/>
    <property type="project" value="GO_Central"/>
</dbReference>
<dbReference type="GO" id="GO:0006357">
    <property type="term" value="P:regulation of transcription by RNA polymerase II"/>
    <property type="evidence" value="ECO:0000318"/>
    <property type="project" value="GO_Central"/>
</dbReference>
<dbReference type="GO" id="GO:0009888">
    <property type="term" value="P:tissue development"/>
    <property type="evidence" value="ECO:0007669"/>
    <property type="project" value="UniProtKB-ARBA"/>
</dbReference>
<dbReference type="CDD" id="cd00086">
    <property type="entry name" value="homeodomain"/>
    <property type="match status" value="1"/>
</dbReference>
<dbReference type="FunFam" id="1.10.10.60:FF:000266">
    <property type="entry name" value="Distal-less homeobox 4a"/>
    <property type="match status" value="1"/>
</dbReference>
<dbReference type="Gene3D" id="1.10.10.60">
    <property type="entry name" value="Homeodomain-like"/>
    <property type="match status" value="1"/>
</dbReference>
<dbReference type="InterPro" id="IPR050460">
    <property type="entry name" value="Distal-less_Homeobox_TF"/>
</dbReference>
<dbReference type="InterPro" id="IPR001356">
    <property type="entry name" value="HD"/>
</dbReference>
<dbReference type="InterPro" id="IPR020479">
    <property type="entry name" value="HD_metazoa"/>
</dbReference>
<dbReference type="InterPro" id="IPR017970">
    <property type="entry name" value="Homeobox_CS"/>
</dbReference>
<dbReference type="InterPro" id="IPR009057">
    <property type="entry name" value="Homeodomain-like_sf"/>
</dbReference>
<dbReference type="InterPro" id="IPR000047">
    <property type="entry name" value="HTH_motif"/>
</dbReference>
<dbReference type="PANTHER" id="PTHR24327:SF86">
    <property type="entry name" value="DISTAL-LESS HOMEOBOX 4"/>
    <property type="match status" value="1"/>
</dbReference>
<dbReference type="PANTHER" id="PTHR24327">
    <property type="entry name" value="HOMEOBOX PROTEIN"/>
    <property type="match status" value="1"/>
</dbReference>
<dbReference type="Pfam" id="PF00046">
    <property type="entry name" value="Homeodomain"/>
    <property type="match status" value="1"/>
</dbReference>
<dbReference type="PRINTS" id="PR00024">
    <property type="entry name" value="HOMEOBOX"/>
</dbReference>
<dbReference type="PRINTS" id="PR00031">
    <property type="entry name" value="HTHREPRESSR"/>
</dbReference>
<dbReference type="SMART" id="SM00389">
    <property type="entry name" value="HOX"/>
    <property type="match status" value="1"/>
</dbReference>
<dbReference type="SUPFAM" id="SSF46689">
    <property type="entry name" value="Homeodomain-like"/>
    <property type="match status" value="1"/>
</dbReference>
<dbReference type="PROSITE" id="PS00027">
    <property type="entry name" value="HOMEOBOX_1"/>
    <property type="match status" value="1"/>
</dbReference>
<dbReference type="PROSITE" id="PS50071">
    <property type="entry name" value="HOMEOBOX_2"/>
    <property type="match status" value="1"/>
</dbReference>
<feature type="chain" id="PRO_0000049050" description="Homeobox protein Dlx4a">
    <location>
        <begin position="1"/>
        <end position="250"/>
    </location>
</feature>
<feature type="DNA-binding region" description="Homeobox" evidence="1">
    <location>
        <begin position="123"/>
        <end position="182"/>
    </location>
</feature>
<feature type="region of interest" description="Disordered" evidence="2">
    <location>
        <begin position="182"/>
        <end position="202"/>
    </location>
</feature>
<accession>Q98879</accession>
<sequence>MTMTSLSESLEASDPSKSAFLEFSHGYQSHQQHSPGVSHAHYPVHGLHQGAHSQYDAAFSPGAASYSRPLAYHYSTAHHHPGAYLPYQHNSAVGYSRVEDADSEKQSSIESGEIRLNGKGKKIRKPRTIYSSLQLQALNQRFQQTQYLALPERADLAAKLGLTQTQVKIWFQNKRSKYKKIMKHGSSGPEGEHLQAASASGAPCSPGMPPLWDVSMPSKGAPIHSGGYMNSFGHWYSGHHQDPMARTQMM</sequence>
<organism>
    <name type="scientific">Danio rerio</name>
    <name type="common">Zebrafish</name>
    <name type="synonym">Brachydanio rerio</name>
    <dbReference type="NCBI Taxonomy" id="7955"/>
    <lineage>
        <taxon>Eukaryota</taxon>
        <taxon>Metazoa</taxon>
        <taxon>Chordata</taxon>
        <taxon>Craniata</taxon>
        <taxon>Vertebrata</taxon>
        <taxon>Euteleostomi</taxon>
        <taxon>Actinopterygii</taxon>
        <taxon>Neopterygii</taxon>
        <taxon>Teleostei</taxon>
        <taxon>Ostariophysi</taxon>
        <taxon>Cypriniformes</taxon>
        <taxon>Danionidae</taxon>
        <taxon>Danioninae</taxon>
        <taxon>Danio</taxon>
    </lineage>
</organism>
<proteinExistence type="evidence at transcript level"/>
<evidence type="ECO:0000255" key="1">
    <source>
        <dbReference type="PROSITE-ProRule" id="PRU00108"/>
    </source>
</evidence>
<evidence type="ECO:0000256" key="2">
    <source>
        <dbReference type="SAM" id="MobiDB-lite"/>
    </source>
</evidence>
<evidence type="ECO:0000305" key="3"/>
<comment type="subcellular location">
    <subcellularLocation>
        <location evidence="1">Nucleus</location>
    </subcellularLocation>
</comment>
<comment type="similarity">
    <text evidence="3">Belongs to the distal-less homeobox family.</text>
</comment>
<gene>
    <name type="primary">dlx4a</name>
    <name type="synonym">dlx8</name>
</gene>